<protein>
    <recommendedName>
        <fullName>RNA polymerase II subunit A C-terminal domain phosphatase</fullName>
        <ecNumber>3.1.3.16</ecNumber>
    </recommendedName>
    <alternativeName>
        <fullName>CTD phosphatase FCP1</fullName>
    </alternativeName>
</protein>
<reference key="1">
    <citation type="journal article" date="1997" name="Nature">
        <title>The nucleotide sequence of Saccharomyces cerevisiae chromosome XIII.</title>
        <authorList>
            <person name="Bowman S."/>
            <person name="Churcher C.M."/>
            <person name="Badcock K."/>
            <person name="Brown D."/>
            <person name="Chillingworth T."/>
            <person name="Connor R."/>
            <person name="Dedman K."/>
            <person name="Devlin K."/>
            <person name="Gentles S."/>
            <person name="Hamlin N."/>
            <person name="Hunt S."/>
            <person name="Jagels K."/>
            <person name="Lye G."/>
            <person name="Moule S."/>
            <person name="Odell C."/>
            <person name="Pearson D."/>
            <person name="Rajandream M.A."/>
            <person name="Rice P."/>
            <person name="Skelton J."/>
            <person name="Walsh S.V."/>
            <person name="Whitehead S."/>
            <person name="Barrell B.G."/>
        </authorList>
    </citation>
    <scope>NUCLEOTIDE SEQUENCE [LARGE SCALE GENOMIC DNA]</scope>
    <source>
        <strain>ATCC 204508 / S288c</strain>
    </source>
</reference>
<reference key="2">
    <citation type="journal article" date="2014" name="G3 (Bethesda)">
        <title>The reference genome sequence of Saccharomyces cerevisiae: Then and now.</title>
        <authorList>
            <person name="Engel S.R."/>
            <person name="Dietrich F.S."/>
            <person name="Fisk D.G."/>
            <person name="Binkley G."/>
            <person name="Balakrishnan R."/>
            <person name="Costanzo M.C."/>
            <person name="Dwight S.S."/>
            <person name="Hitz B.C."/>
            <person name="Karra K."/>
            <person name="Nash R.S."/>
            <person name="Weng S."/>
            <person name="Wong E.D."/>
            <person name="Lloyd P."/>
            <person name="Skrzypek M.S."/>
            <person name="Miyasato S.R."/>
            <person name="Simison M."/>
            <person name="Cherry J.M."/>
        </authorList>
    </citation>
    <scope>GENOME REANNOTATION</scope>
    <source>
        <strain>ATCC 204508 / S288c</strain>
    </source>
</reference>
<reference key="3">
    <citation type="journal article" date="1996" name="J. Biol. Chem.">
        <title>Purification and characterization of an RNA polymerase II phosphatase from yeast.</title>
        <authorList>
            <person name="Chambers R.S."/>
            <person name="Kane C.M."/>
        </authorList>
    </citation>
    <scope>CHARACTERIZATION</scope>
</reference>
<reference key="4">
    <citation type="journal article" date="1999" name="Mol. Cell">
        <title>An unusual eukaryotic protein phosphatase required for transcription by RNA polymerase II and CTD dephosphorylation in S. cerevisiae.</title>
        <authorList>
            <person name="Kobor M.S."/>
            <person name="Archambault J."/>
            <person name="Lester W."/>
            <person name="Holstege F.C.P."/>
            <person name="Gileadi O."/>
            <person name="Jansma D.B."/>
            <person name="Jennings E.G."/>
            <person name="Kouyoumdjian F."/>
            <person name="Davidson A.R."/>
            <person name="Young R.A."/>
            <person name="Greenblatt J."/>
        </authorList>
    </citation>
    <scope>FUNCTION</scope>
</reference>
<reference key="5">
    <citation type="journal article" date="2003" name="Nature">
        <title>Global analysis of protein expression in yeast.</title>
        <authorList>
            <person name="Ghaemmaghami S."/>
            <person name="Huh W.-K."/>
            <person name="Bower K."/>
            <person name="Howson R.W."/>
            <person name="Belle A."/>
            <person name="Dephoure N."/>
            <person name="O'Shea E.K."/>
            <person name="Weissman J.S."/>
        </authorList>
    </citation>
    <scope>LEVEL OF PROTEIN EXPRESSION [LARGE SCALE ANALYSIS]</scope>
</reference>
<reference key="6">
    <citation type="journal article" date="2008" name="Mol. Cell. Proteomics">
        <title>A multidimensional chromatography technology for in-depth phosphoproteome analysis.</title>
        <authorList>
            <person name="Albuquerque C.P."/>
            <person name="Smolka M.B."/>
            <person name="Payne S.H."/>
            <person name="Bafna V."/>
            <person name="Eng J."/>
            <person name="Zhou H."/>
        </authorList>
    </citation>
    <scope>PHOSPHORYLATION [LARGE SCALE ANALYSIS] AT SER-701</scope>
    <scope>IDENTIFICATION BY MASS SPECTROMETRY [LARGE SCALE ANALYSIS]</scope>
</reference>
<reference key="7">
    <citation type="journal article" date="2009" name="Science">
        <title>Global analysis of Cdk1 substrate phosphorylation sites provides insights into evolution.</title>
        <authorList>
            <person name="Holt L.J."/>
            <person name="Tuch B.B."/>
            <person name="Villen J."/>
            <person name="Johnson A.D."/>
            <person name="Gygi S.P."/>
            <person name="Morgan D.O."/>
        </authorList>
    </citation>
    <scope>PHOSPHORYLATION [LARGE SCALE ANALYSIS] AT SER-718 AND SER-720</scope>
    <scope>IDENTIFICATION BY MASS SPECTROMETRY [LARGE SCALE ANALYSIS]</scope>
</reference>
<reference key="8">
    <citation type="journal article" date="2012" name="Proteomics">
        <title>Sites of ubiquitin attachment in Saccharomyces cerevisiae.</title>
        <authorList>
            <person name="Starita L.M."/>
            <person name="Lo R.S."/>
            <person name="Eng J.K."/>
            <person name="von Haller P.D."/>
            <person name="Fields S."/>
        </authorList>
    </citation>
    <scope>UBIQUITINATION [LARGE SCALE ANALYSIS] AT LYS-74</scope>
    <scope>IDENTIFICATION BY MASS SPECTROMETRY [LARGE SCALE ANALYSIS]</scope>
</reference>
<evidence type="ECO:0000255" key="1">
    <source>
        <dbReference type="PROSITE-ProRule" id="PRU00033"/>
    </source>
</evidence>
<evidence type="ECO:0000255" key="2">
    <source>
        <dbReference type="PROSITE-ProRule" id="PRU00336"/>
    </source>
</evidence>
<evidence type="ECO:0000256" key="3">
    <source>
        <dbReference type="SAM" id="MobiDB-lite"/>
    </source>
</evidence>
<evidence type="ECO:0000269" key="4">
    <source>
    </source>
</evidence>
<evidence type="ECO:0000269" key="5">
    <source>
    </source>
</evidence>
<evidence type="ECO:0007744" key="6">
    <source>
    </source>
</evidence>
<evidence type="ECO:0007744" key="7">
    <source>
    </source>
</evidence>
<evidence type="ECO:0007744" key="8">
    <source>
    </source>
</evidence>
<gene>
    <name type="primary">FCP1</name>
    <name type="ordered locus">YMR277W</name>
    <name type="ORF">YM8021.03</name>
</gene>
<name>FCP1_YEAST</name>
<organism>
    <name type="scientific">Saccharomyces cerevisiae (strain ATCC 204508 / S288c)</name>
    <name type="common">Baker's yeast</name>
    <dbReference type="NCBI Taxonomy" id="559292"/>
    <lineage>
        <taxon>Eukaryota</taxon>
        <taxon>Fungi</taxon>
        <taxon>Dikarya</taxon>
        <taxon>Ascomycota</taxon>
        <taxon>Saccharomycotina</taxon>
        <taxon>Saccharomycetes</taxon>
        <taxon>Saccharomycetales</taxon>
        <taxon>Saccharomycetaceae</taxon>
        <taxon>Saccharomyces</taxon>
    </lineage>
</organism>
<keyword id="KW-0378">Hydrolase</keyword>
<keyword id="KW-1017">Isopeptide bond</keyword>
<keyword id="KW-0539">Nucleus</keyword>
<keyword id="KW-0597">Phosphoprotein</keyword>
<keyword id="KW-0904">Protein phosphatase</keyword>
<keyword id="KW-1185">Reference proteome</keyword>
<keyword id="KW-0832">Ubl conjugation</keyword>
<comment type="function">
    <text evidence="4">Processively dephosphorylates 'Ser-2' and 'Ser-5' of the heptad repeats YSPTSPS in the C-terminal domain of the largest RNA polymerase II subunit (RPB1). This promotes the activity of RNA polymerase II.</text>
</comment>
<comment type="catalytic activity">
    <reaction>
        <text>O-phospho-L-seryl-[protein] + H2O = L-seryl-[protein] + phosphate</text>
        <dbReference type="Rhea" id="RHEA:20629"/>
        <dbReference type="Rhea" id="RHEA-COMP:9863"/>
        <dbReference type="Rhea" id="RHEA-COMP:11604"/>
        <dbReference type="ChEBI" id="CHEBI:15377"/>
        <dbReference type="ChEBI" id="CHEBI:29999"/>
        <dbReference type="ChEBI" id="CHEBI:43474"/>
        <dbReference type="ChEBI" id="CHEBI:83421"/>
        <dbReference type="EC" id="3.1.3.16"/>
    </reaction>
</comment>
<comment type="catalytic activity">
    <reaction>
        <text>O-phospho-L-threonyl-[protein] + H2O = L-threonyl-[protein] + phosphate</text>
        <dbReference type="Rhea" id="RHEA:47004"/>
        <dbReference type="Rhea" id="RHEA-COMP:11060"/>
        <dbReference type="Rhea" id="RHEA-COMP:11605"/>
        <dbReference type="ChEBI" id="CHEBI:15377"/>
        <dbReference type="ChEBI" id="CHEBI:30013"/>
        <dbReference type="ChEBI" id="CHEBI:43474"/>
        <dbReference type="ChEBI" id="CHEBI:61977"/>
        <dbReference type="EC" id="3.1.3.16"/>
    </reaction>
</comment>
<comment type="subcellular location">
    <subcellularLocation>
        <location>Nucleus</location>
    </subcellularLocation>
</comment>
<comment type="miscellaneous">
    <text evidence="5">Present with 6550 molecules/cell in log phase SD medium.</text>
</comment>
<proteinExistence type="evidence at protein level"/>
<dbReference type="EC" id="3.1.3.16"/>
<dbReference type="EMBL" id="Z49704">
    <property type="protein sequence ID" value="CAA89775.1"/>
    <property type="molecule type" value="Genomic_DNA"/>
</dbReference>
<dbReference type="EMBL" id="BK006946">
    <property type="protein sequence ID" value="DAA10178.1"/>
    <property type="molecule type" value="Genomic_DNA"/>
</dbReference>
<dbReference type="PIR" id="S54584">
    <property type="entry name" value="S54584"/>
</dbReference>
<dbReference type="RefSeq" id="NP_014004.1">
    <property type="nucleotide sequence ID" value="NM_001182784.1"/>
</dbReference>
<dbReference type="SMR" id="Q03254"/>
<dbReference type="BioGRID" id="35456">
    <property type="interactions" value="595"/>
</dbReference>
<dbReference type="DIP" id="DIP-2330N"/>
<dbReference type="FunCoup" id="Q03254">
    <property type="interactions" value="958"/>
</dbReference>
<dbReference type="IntAct" id="Q03254">
    <property type="interactions" value="15"/>
</dbReference>
<dbReference type="MINT" id="Q03254"/>
<dbReference type="STRING" id="4932.YMR277W"/>
<dbReference type="iPTMnet" id="Q03254"/>
<dbReference type="PaxDb" id="4932-YMR277W"/>
<dbReference type="PeptideAtlas" id="Q03254"/>
<dbReference type="EnsemblFungi" id="YMR277W_mRNA">
    <property type="protein sequence ID" value="YMR277W"/>
    <property type="gene ID" value="YMR277W"/>
</dbReference>
<dbReference type="GeneID" id="855320"/>
<dbReference type="KEGG" id="sce:YMR277W"/>
<dbReference type="AGR" id="SGD:S000004890"/>
<dbReference type="SGD" id="S000004890">
    <property type="gene designation" value="FCP1"/>
</dbReference>
<dbReference type="VEuPathDB" id="FungiDB:YMR277W"/>
<dbReference type="eggNOG" id="KOG0323">
    <property type="taxonomic scope" value="Eukaryota"/>
</dbReference>
<dbReference type="GeneTree" id="ENSGT00390000015641"/>
<dbReference type="HOGENOM" id="CLU_007683_0_0_1"/>
<dbReference type="InParanoid" id="Q03254"/>
<dbReference type="OMA" id="DQTVIHC"/>
<dbReference type="OrthoDB" id="10249888at2759"/>
<dbReference type="BioCyc" id="YEAST:G3O-32948-MONOMER"/>
<dbReference type="Reactome" id="R-SCE-113418">
    <property type="pathway name" value="Formation of the Early Elongation Complex"/>
</dbReference>
<dbReference type="Reactome" id="R-SCE-674695">
    <property type="pathway name" value="RNA Polymerase II Pre-transcription Events"/>
</dbReference>
<dbReference type="Reactome" id="R-SCE-6796648">
    <property type="pathway name" value="TP53 Regulates Transcription of DNA Repair Genes"/>
</dbReference>
<dbReference type="BioGRID-ORCS" id="855320">
    <property type="hits" value="4 hits in 10 CRISPR screens"/>
</dbReference>
<dbReference type="PRO" id="PR:Q03254"/>
<dbReference type="Proteomes" id="UP000002311">
    <property type="component" value="Chromosome XIII"/>
</dbReference>
<dbReference type="RNAct" id="Q03254">
    <property type="molecule type" value="protein"/>
</dbReference>
<dbReference type="GO" id="GO:0005829">
    <property type="term" value="C:cytosol"/>
    <property type="evidence" value="ECO:0000314"/>
    <property type="project" value="SGD"/>
</dbReference>
<dbReference type="GO" id="GO:0005634">
    <property type="term" value="C:nucleus"/>
    <property type="evidence" value="ECO:0000314"/>
    <property type="project" value="SGD"/>
</dbReference>
<dbReference type="GO" id="GO:0004722">
    <property type="term" value="F:protein serine/threonine phosphatase activity"/>
    <property type="evidence" value="ECO:0000314"/>
    <property type="project" value="SGD"/>
</dbReference>
<dbReference type="GO" id="GO:0008420">
    <property type="term" value="F:RNA polymerase II CTD heptapeptide repeat phosphatase activity"/>
    <property type="evidence" value="ECO:0000318"/>
    <property type="project" value="GO_Central"/>
</dbReference>
<dbReference type="GO" id="GO:0006357">
    <property type="term" value="P:regulation of transcription by RNA polymerase II"/>
    <property type="evidence" value="ECO:0000315"/>
    <property type="project" value="SGD"/>
</dbReference>
<dbReference type="CDD" id="cd17729">
    <property type="entry name" value="BRCT_CTDP1"/>
    <property type="match status" value="1"/>
</dbReference>
<dbReference type="CDD" id="cd07521">
    <property type="entry name" value="HAD_FCP1-like"/>
    <property type="match status" value="1"/>
</dbReference>
<dbReference type="FunFam" id="1.10.287.10:FF:000024">
    <property type="entry name" value="Protein phosphatase"/>
    <property type="match status" value="1"/>
</dbReference>
<dbReference type="FunFam" id="3.40.50.10190:FF:000049">
    <property type="entry name" value="RNA Polymerase II CTD phosphatase Fcp1"/>
    <property type="match status" value="1"/>
</dbReference>
<dbReference type="FunFam" id="3.40.50.1000:FF:000142">
    <property type="entry name" value="Similar to FCP1-like phosphatase"/>
    <property type="match status" value="1"/>
</dbReference>
<dbReference type="Gene3D" id="3.40.50.10190">
    <property type="entry name" value="BRCT domain"/>
    <property type="match status" value="1"/>
</dbReference>
<dbReference type="Gene3D" id="3.40.50.1000">
    <property type="entry name" value="HAD superfamily/HAD-like"/>
    <property type="match status" value="1"/>
</dbReference>
<dbReference type="Gene3D" id="1.10.287.10">
    <property type="entry name" value="S15/NS1, RNA-binding"/>
    <property type="match status" value="1"/>
</dbReference>
<dbReference type="InterPro" id="IPR001357">
    <property type="entry name" value="BRCT_dom"/>
</dbReference>
<dbReference type="InterPro" id="IPR036420">
    <property type="entry name" value="BRCT_dom_sf"/>
</dbReference>
<dbReference type="InterPro" id="IPR039189">
    <property type="entry name" value="Fcp1"/>
</dbReference>
<dbReference type="InterPro" id="IPR004274">
    <property type="entry name" value="FCP1_dom"/>
</dbReference>
<dbReference type="InterPro" id="IPR011947">
    <property type="entry name" value="FCP1_euk"/>
</dbReference>
<dbReference type="InterPro" id="IPR036412">
    <property type="entry name" value="HAD-like_sf"/>
</dbReference>
<dbReference type="InterPro" id="IPR023214">
    <property type="entry name" value="HAD_sf"/>
</dbReference>
<dbReference type="NCBIfam" id="TIGR02250">
    <property type="entry name" value="FCP1_euk"/>
    <property type="match status" value="1"/>
</dbReference>
<dbReference type="PANTHER" id="PTHR23081">
    <property type="entry name" value="RNA POLYMERASE II CTD PHOSPHATASE"/>
    <property type="match status" value="1"/>
</dbReference>
<dbReference type="PANTHER" id="PTHR23081:SF36">
    <property type="entry name" value="RNA POLYMERASE II SUBUNIT A C-TERMINAL DOMAIN PHOSPHATASE"/>
    <property type="match status" value="1"/>
</dbReference>
<dbReference type="Pfam" id="PF00533">
    <property type="entry name" value="BRCT"/>
    <property type="match status" value="1"/>
</dbReference>
<dbReference type="Pfam" id="PF03031">
    <property type="entry name" value="NIF"/>
    <property type="match status" value="1"/>
</dbReference>
<dbReference type="SMART" id="SM00292">
    <property type="entry name" value="BRCT"/>
    <property type="match status" value="1"/>
</dbReference>
<dbReference type="SMART" id="SM00577">
    <property type="entry name" value="CPDc"/>
    <property type="match status" value="1"/>
</dbReference>
<dbReference type="SUPFAM" id="SSF52113">
    <property type="entry name" value="BRCT domain"/>
    <property type="match status" value="1"/>
</dbReference>
<dbReference type="SUPFAM" id="SSF56784">
    <property type="entry name" value="HAD-like"/>
    <property type="match status" value="1"/>
</dbReference>
<dbReference type="PROSITE" id="PS50172">
    <property type="entry name" value="BRCT"/>
    <property type="match status" value="1"/>
</dbReference>
<dbReference type="PROSITE" id="PS50969">
    <property type="entry name" value="FCP1"/>
    <property type="match status" value="1"/>
</dbReference>
<accession>Q03254</accession>
<accession>D6W0A4</accession>
<feature type="chain" id="PRO_0000212568" description="RNA polymerase II subunit A C-terminal domain phosphatase">
    <location>
        <begin position="1"/>
        <end position="732"/>
    </location>
</feature>
<feature type="domain" description="FCP1 homology" evidence="2">
    <location>
        <begin position="170"/>
        <end position="363"/>
    </location>
</feature>
<feature type="domain" description="BRCT" evidence="1">
    <location>
        <begin position="499"/>
        <end position="593"/>
    </location>
</feature>
<feature type="region of interest" description="Disordered" evidence="3">
    <location>
        <begin position="50"/>
        <end position="73"/>
    </location>
</feature>
<feature type="region of interest" description="Disordered" evidence="3">
    <location>
        <begin position="642"/>
        <end position="732"/>
    </location>
</feature>
<feature type="compositionally biased region" description="Acidic residues" evidence="3">
    <location>
        <begin position="646"/>
        <end position="674"/>
    </location>
</feature>
<feature type="compositionally biased region" description="Basic and acidic residues" evidence="3">
    <location>
        <begin position="677"/>
        <end position="712"/>
    </location>
</feature>
<feature type="compositionally biased region" description="Acidic residues" evidence="3">
    <location>
        <begin position="713"/>
        <end position="732"/>
    </location>
</feature>
<feature type="modified residue" description="Phosphoserine" evidence="6">
    <location>
        <position position="701"/>
    </location>
</feature>
<feature type="modified residue" description="Phosphoserine" evidence="7">
    <location>
        <position position="718"/>
    </location>
</feature>
<feature type="modified residue" description="Phosphoserine" evidence="7">
    <location>
        <position position="720"/>
    </location>
</feature>
<feature type="cross-link" description="Glycyl lysine isopeptide (Lys-Gly) (interchain with G-Cter in ubiquitin)" evidence="8">
    <location>
        <position position="74"/>
    </location>
</feature>
<sequence>MTTQIRSPQGLPYPIQIDKLIPSVGSYLHEGDRLLVYKFWYLVERASDTGDDDNEHDVSPGGSAGSNGVSPPTKQLRESIEFFESPYEGDLISWNVDVGDEVATANQVICEIKRPCNHDIVYGGLCTQCGKEVSADAFDGVPLDVVGDVDLQISETEAIRTGKALKEHLRRDKKLILVVDLDQTIIHCGVDPTIAEWKNDPNNPNFETLRDVKSFTLDEELVLPLMYMNDDGSMLRPPPVRKCWYYVKVRPGLKEFFAKVAPLFEMHIYTMATRAYALQIAKIVDPTGELFGDRILSRDENGSLTTKSLAKLFPTDQSMVVVIDDRGDVWNWCPNLIKVVPYNFFVGVGDINSNFLPKQSTGMLQLGRKTRQKSQESQELLTDIMDNEKKLQEKIDKEVKRQEEKLNHQLATAEEPPANESKEELTKKLEYSASLEVQQQNRPLAKLQKHLHDQKLLVDDDDELYYLMGTLSNIHKTYYDMLSQQNEPEPNLMEIIPSLKQKVFQNCYFVFSGLIPLGTDIQRSDIVIWTSTFGATSTPDIDYLTTHLITKNPSTYKARLAKKFNPQIKIVHPDWIFECLVNWKKVDEKPYTLIVDSPISDEELQNFQTQLQKRQEYLEETQEQQHMLTSQENLNLFAAGTSWLNNDDDEDIPDTASDDDEDDDHDDESDDENNSEGIDRKRSIEDNHDDTSQKKTKAEPSQDGPVQHKGEGDDNEDSDSQLEEELMDMLDD</sequence>